<organism>
    <name type="scientific">Escherichia coli (strain K12)</name>
    <dbReference type="NCBI Taxonomy" id="83333"/>
    <lineage>
        <taxon>Bacteria</taxon>
        <taxon>Pseudomonadati</taxon>
        <taxon>Pseudomonadota</taxon>
        <taxon>Gammaproteobacteria</taxon>
        <taxon>Enterobacterales</taxon>
        <taxon>Enterobacteriaceae</taxon>
        <taxon>Escherichia</taxon>
    </lineage>
</organism>
<sequence>MNVIAILNHMGVYFKEEPIRELHRALERLNFQIVYPNDRDDLLKLIENNARLCGVIFDWDKYNLELCEEISKMNENLPLYAFANTYSTLDVSLNDLRLQISFFEYALGAAEDIANKIKQTTDEYINTILPPLTKALFKYVREGKYTFCTPGHMGGTAFQKSPVGSLFYDFFGPNTMKSDISISVSELGSLLDHSGPHKEAEQYIARVFNADRSYMVTNGTSTANKIVGMYSAPAGSTILIDRNCHKSLTHLMMMSDVTPIYFRPTRNAYGILGGIPQSEFQHATIAKRVKETPNATWPVHAVITNSTYDGLLYNTDFIKKTLDVKSIHFDSAWVPYTNFSPIYEGKCGMSGGRVEGKVIYETQSTHKLLAAFSQASMIHVKGDVNEETFNEAYMMHTTTSPHYGIVASTETAAAMMKGNAGKRLINGSIERAIKFRKEIKRLRTESDGWFFDVWQPDHIDTTECWPLRSDSTWHGFKNIDNEHMYLDPIKVTLLTPGMEKDGTMSDFGIPASIVAKYLDEHGIVVEKTGPYNLLFLFSIGIDKTKALSLLRALTDFKRAFDLNLRVKNMLPSLYREDPEFYENMRIQELAQNIHKLIVHHNLPDLMYRAFEVLPTMVMTPYAAFQKELHGMTEEVYLDEMVGRINANMILPYPPGVPLVMPGEMITEESRPVLEFLQMLCEIGAHYPGFETDIHGAYRQADGRYTVKVLKEESKK</sequence>
<proteinExistence type="evidence at protein level"/>
<protein>
    <recommendedName>
        <fullName evidence="11">Inducible lysine decarboxylase</fullName>
        <shortName>LDCI</shortName>
        <ecNumber evidence="9">4.1.1.18</ecNumber>
    </recommendedName>
</protein>
<comment type="function">
    <text evidence="4 9">Inducible lysine decarboxylase that catalyzes the proton-dependent decarboxylation of L-lysine to produce the polyamine cadaverine and carbon dioxide (PubMed:4590109). Plays a role in pH homeostasis by consuming protons and neutralizing the acidic by-products of carbohydrate fermentation (PubMed:17209032).</text>
</comment>
<comment type="catalytic activity">
    <reaction evidence="9">
        <text>L-lysine + H(+) = cadaverine + CO2</text>
        <dbReference type="Rhea" id="RHEA:22352"/>
        <dbReference type="ChEBI" id="CHEBI:15378"/>
        <dbReference type="ChEBI" id="CHEBI:16526"/>
        <dbReference type="ChEBI" id="CHEBI:32551"/>
        <dbReference type="ChEBI" id="CHEBI:58384"/>
        <dbReference type="EC" id="4.1.1.18"/>
    </reaction>
</comment>
<comment type="cofactor">
    <cofactor>
        <name>pyridoxal 5'-phosphate</name>
        <dbReference type="ChEBI" id="CHEBI:597326"/>
    </cofactor>
</comment>
<comment type="activity regulation">
    <text evidence="5">Inhibited by ppGpp, also known as the alarmone.</text>
</comment>
<comment type="subunit">
    <text evidence="2 5 7 8 9">Homodecamer; built of five dimers associated in a 5-fold symmetrical double-ring (PubMed:16301313, PubMed:21278708, PubMed:25097238, PubMed:27080013, PubMed:4590109). Interacts (via C-terminus) with RavA (PubMed:16301313, PubMed:25097238, PubMed:27080013).</text>
</comment>
<comment type="interaction">
    <interactant intactId="EBI-545922">
        <id>P0A9H3</id>
    </interactant>
    <interactant intactId="EBI-545922">
        <id>P0A9H3</id>
        <label>cadA</label>
    </interactant>
    <organismsDiffer>false</organismsDiffer>
    <experiments>8</experiments>
</comment>
<comment type="interaction">
    <interactant intactId="EBI-545922">
        <id>P0A9H3</id>
    </interactant>
    <interactant intactId="EBI-545944">
        <id>P52095</id>
        <label>ldcC</label>
    </interactant>
    <organismsDiffer>false</organismsDiffer>
    <experiments>5</experiments>
</comment>
<comment type="interaction">
    <interactant intactId="EBI-545922">
        <id>P0A9H3</id>
    </interactant>
    <interactant intactId="EBI-561223">
        <id>P31473</id>
        <label>ravA</label>
    </interactant>
    <organismsDiffer>false</organismsDiffer>
    <experiments>13</experiments>
</comment>
<comment type="subcellular location">
    <subcellularLocation>
        <location evidence="12">Cytoplasm</location>
    </subcellularLocation>
</comment>
<comment type="induction">
    <text evidence="1 3 6 10">Part of the cadB-cadA operon, which is under the control of the Pcad promoter (PubMed:16491024). Expression is regulated by CadC (PubMed:1370290, PubMed:16491024, PubMed:8808945). Induction occurs under conditions of low pH with excess lysine and anaerobiosis (PubMed:1370290, PubMed:16491024, PubMed:8808945). The global regulator Lrp also has a positive effect on the expression of the cadBA operon when cells are exposed to moderate acidic stress in the presence of lysine (PubMed:21441513). Repressed by H-NS under non-inducing conditions (PubMed:16491024).</text>
</comment>
<comment type="similarity">
    <text evidence="12">Belongs to the Orn/Lys/Arg decarboxylase class-I family.</text>
</comment>
<keyword id="KW-0002">3D-structure</keyword>
<keyword id="KW-0963">Cytoplasm</keyword>
<keyword id="KW-0210">Decarboxylase</keyword>
<keyword id="KW-0903">Direct protein sequencing</keyword>
<keyword id="KW-0456">Lyase</keyword>
<keyword id="KW-0663">Pyridoxal phosphate</keyword>
<keyword id="KW-1185">Reference proteome</keyword>
<reference key="1">
    <citation type="journal article" date="1992" name="J. Bacteriol.">
        <title>Nucleotide sequence of the Escherichia coli cad operon: a system for neutralization of low extracellular pH.</title>
        <authorList>
            <person name="Meng S.-Y."/>
            <person name="Bennett G.N."/>
        </authorList>
    </citation>
    <scope>NUCLEOTIDE SEQUENCE [GENOMIC DNA]</scope>
</reference>
<reference key="2">
    <citation type="journal article" date="1995" name="Nucleic Acids Res.">
        <title>Analysis of the Escherichia coli genome VI: DNA sequence of the region from 92.8 through 100 minutes.</title>
        <authorList>
            <person name="Burland V.D."/>
            <person name="Plunkett G. III"/>
            <person name="Sofia H.J."/>
            <person name="Daniels D.L."/>
            <person name="Blattner F.R."/>
        </authorList>
    </citation>
    <scope>NUCLEOTIDE SEQUENCE [LARGE SCALE GENOMIC DNA]</scope>
    <source>
        <strain>K12 / MG1655 / ATCC 47076</strain>
    </source>
</reference>
<reference key="3">
    <citation type="journal article" date="1997" name="Science">
        <title>The complete genome sequence of Escherichia coli K-12.</title>
        <authorList>
            <person name="Blattner F.R."/>
            <person name="Plunkett G. III"/>
            <person name="Bloch C.A."/>
            <person name="Perna N.T."/>
            <person name="Burland V."/>
            <person name="Riley M."/>
            <person name="Collado-Vides J."/>
            <person name="Glasner J.D."/>
            <person name="Rode C.K."/>
            <person name="Mayhew G.F."/>
            <person name="Gregor J."/>
            <person name="Davis N.W."/>
            <person name="Kirkpatrick H.A."/>
            <person name="Goeden M.A."/>
            <person name="Rose D.J."/>
            <person name="Mau B."/>
            <person name="Shao Y."/>
        </authorList>
    </citation>
    <scope>NUCLEOTIDE SEQUENCE [LARGE SCALE GENOMIC DNA]</scope>
    <source>
        <strain>K12 / MG1655 / ATCC 47076</strain>
    </source>
</reference>
<reference key="4">
    <citation type="journal article" date="2006" name="Mol. Syst. Biol.">
        <title>Highly accurate genome sequences of Escherichia coli K-12 strains MG1655 and W3110.</title>
        <authorList>
            <person name="Hayashi K."/>
            <person name="Morooka N."/>
            <person name="Yamamoto Y."/>
            <person name="Fujita K."/>
            <person name="Isono K."/>
            <person name="Choi S."/>
            <person name="Ohtsubo E."/>
            <person name="Baba T."/>
            <person name="Wanner B.L."/>
            <person name="Mori H."/>
            <person name="Horiuchi T."/>
        </authorList>
    </citation>
    <scope>NUCLEOTIDE SEQUENCE [LARGE SCALE GENOMIC DNA]</scope>
    <source>
        <strain>K12 / W3110 / ATCC 27325 / DSM 5911</strain>
    </source>
</reference>
<reference key="5">
    <citation type="journal article" date="1992" name="J. Bacteriol.">
        <title>Identification of elements involved in transcriptional regulation of the Escherichia coli cad operon by external pH.</title>
        <authorList>
            <person name="Watson N."/>
            <person name="Dunyak D.S."/>
            <person name="Rosey E.L."/>
            <person name="Slonczewski J.L."/>
            <person name="Olson E.R."/>
        </authorList>
    </citation>
    <scope>NUCLEOTIDE SEQUENCE [GENOMIC DNA] OF 1-280</scope>
    <scope>INDUCTION</scope>
    <source>
        <strain>JLS821</strain>
    </source>
</reference>
<reference key="6">
    <citation type="journal article" date="1974" name="Biochemistry">
        <title>Chemical properties of Escherichia coli lysine decarboxylase including a segment of its pyridoxal 5'-phosphate binding site.</title>
        <authorList>
            <person name="Sabo D.L."/>
            <person name="Fischer E.H."/>
        </authorList>
    </citation>
    <scope>PROTEIN SEQUENCE OF 1-7 AND 358-372</scope>
    <scope>PYRIDOXAL PHOSPHATE AT LYS-367</scope>
</reference>
<reference key="7">
    <citation type="journal article" date="1989" name="Mol. Microbiol.">
        <title>Construction of lac fusions to the inducible arginine- and lysine decarboxylase genes of Escherichia coli K12.</title>
        <authorList>
            <person name="Auger E.A."/>
            <person name="Redding K.E."/>
            <person name="Plumb T."/>
            <person name="Childs L.C."/>
            <person name="Meng S.Y."/>
            <person name="Bennett G.N."/>
        </authorList>
    </citation>
    <scope>NUCLEOTIDE SEQUENCE [GENOMIC DNA] OF 358-372</scope>
    <source>
        <strain>K12</strain>
    </source>
</reference>
<reference key="8">
    <citation type="journal article" date="1974" name="Biochemistry">
        <title>Purification and physical properties of inducible Escherichia coli lysine decarboxylase.</title>
        <authorList>
            <person name="Sabo D.L."/>
            <person name="Boeker E.A."/>
            <person name="Byers B."/>
            <person name="Waron H."/>
            <person name="Fischer E.H."/>
        </authorList>
    </citation>
    <scope>FUNCTION</scope>
    <scope>CATALYTIC ACTIVITY</scope>
    <scope>SUBUNIT</scope>
</reference>
<reference key="9">
    <citation type="journal article" date="1996" name="J. Bacteriol.">
        <title>Kinetics of expression of the Escherichia coli cad operon as a function of pH and lysine.</title>
        <authorList>
            <person name="Neely M.N."/>
            <person name="Olson E.R."/>
        </authorList>
    </citation>
    <scope>INDUCTION BY CADC</scope>
</reference>
<reference key="10">
    <citation type="journal article" date="1997" name="Electrophoresis">
        <title>Escherichia coli proteome analysis using the gene-protein database.</title>
        <authorList>
            <person name="VanBogelen R.A."/>
            <person name="Abshire K.Z."/>
            <person name="Moldover B."/>
            <person name="Olson E.R."/>
            <person name="Neidhardt F.C."/>
        </authorList>
    </citation>
    <scope>IDENTIFICATION BY 2D-GEL</scope>
</reference>
<reference key="11">
    <citation type="journal article" date="2005" name="J. Mol. Microbiol. Biotechnol.">
        <title>CadC-mediated activation of the cadBA promoter in Escherichia coli.</title>
        <authorList>
            <person name="Kuper C."/>
            <person name="Jung K."/>
        </authorList>
    </citation>
    <scope>INDUCTION</scope>
</reference>
<reference key="12">
    <citation type="journal article" date="2006" name="J. Biol. Chem.">
        <title>Formation of a distinctive complex between the inducible bacterial lysine decarboxylase and a novel AAA+ ATPase.</title>
        <authorList>
            <person name="Snider J."/>
            <person name="Gutsche I."/>
            <person name="Lin M."/>
            <person name="Baby S."/>
            <person name="Cox B."/>
            <person name="Butland G."/>
            <person name="Greenblatt J."/>
            <person name="Emili A."/>
            <person name="Houry W.A."/>
        </authorList>
    </citation>
    <scope>SUBUNIT</scope>
    <scope>INTERACTION WITH RAVA</scope>
    <source>
        <strain>K12 / MG1655 / ATCC 47076</strain>
    </source>
</reference>
<reference key="13">
    <citation type="journal article" date="2007" name="J. Bacteriol.">
        <title>The lysine decarboxylase CadA protects Escherichia coli starved of phosphate against fermentation acids.</title>
        <authorList>
            <person name="Moreau P.L."/>
        </authorList>
    </citation>
    <scope>FUNCTION</scope>
    <source>
        <strain>K12 / MG1655 / ATCC 47076</strain>
    </source>
</reference>
<reference key="14">
    <citation type="journal article" date="2011" name="J. Bacteriol.">
        <title>Identification of ArgP and Lrp as transcriptional regulators of lysP, the gene encoding the specific lysine permease of Escherichia coli.</title>
        <authorList>
            <person name="Ruiz J."/>
            <person name="Haneburger I."/>
            <person name="Jung K."/>
        </authorList>
    </citation>
    <scope>TRANSCRIPTIONAL REGULATION BY LRP</scope>
    <source>
        <strain>K12 / MG1655 / ATCC 47076</strain>
    </source>
</reference>
<reference key="15">
    <citation type="journal article" date="2011" name="EMBO J.">
        <title>Linkage between the bacterial acid stress and stringent responses: the structure of the inducible lysine decarboxylase.</title>
        <authorList>
            <person name="Kanjee U."/>
            <person name="Gutsche I."/>
            <person name="Alexopoulos E."/>
            <person name="Zhao B."/>
            <person name="El Bakkouri M."/>
            <person name="Thibault G."/>
            <person name="Liu K."/>
            <person name="Ramachandran S."/>
            <person name="Snider J."/>
            <person name="Pai E.F."/>
            <person name="Houry W.A."/>
        </authorList>
    </citation>
    <scope>X-RAY CRYSTALLOGRAPHY (2.00 ANGSTROMS)</scope>
    <scope>SUBUNIT</scope>
    <scope>ACTIVITY REGULATION</scope>
</reference>
<reference key="16">
    <citation type="journal article" date="2014" name="Elife">
        <title>Assembly principles of a unique cage formed by hexameric and decameric E. coli proteins.</title>
        <authorList>
            <person name="Malet H."/>
            <person name="Liu K."/>
            <person name="El Bakkouri M."/>
            <person name="Chan S.W."/>
            <person name="Effantin G."/>
            <person name="Bacia M."/>
            <person name="Houry W.A."/>
            <person name="Gutsche I."/>
        </authorList>
    </citation>
    <scope>STRUCTURE BY ELECTRON MICROSCOPY (7.50 ANGSTROMS)</scope>
    <scope>SUBUNIT</scope>
    <scope>INTERACTION WITH RAVA</scope>
</reference>
<reference key="17">
    <citation type="journal article" date="2016" name="Sci. Rep.">
        <title>Structural insights into the Escherichia coli lysine decarboxylases and molecular determinants of interaction with the AAA+ ATPase RavA.</title>
        <authorList>
            <person name="Kandiah E."/>
            <person name="Carriel D."/>
            <person name="Perard J."/>
            <person name="Malet H."/>
            <person name="Bacia M."/>
            <person name="Liu K."/>
            <person name="Chan S.W."/>
            <person name="Houry W.A."/>
            <person name="Ollagnier de Choudens S."/>
            <person name="Elsen S."/>
            <person name="Gutsche I."/>
        </authorList>
    </citation>
    <scope>STRUCTURE BY ELECTRON MICROSCOPY (6.10 ANGSTROMS) OF 1-711</scope>
    <scope>SUBUNIT</scope>
    <scope>INTERACTION WITH RAVA</scope>
</reference>
<dbReference type="EC" id="4.1.1.18" evidence="9"/>
<dbReference type="EMBL" id="M76411">
    <property type="protein sequence ID" value="AAA23536.1"/>
    <property type="molecule type" value="Genomic_DNA"/>
</dbReference>
<dbReference type="EMBL" id="U14003">
    <property type="protein sequence ID" value="AAA97031.1"/>
    <property type="molecule type" value="Genomic_DNA"/>
</dbReference>
<dbReference type="EMBL" id="U00096">
    <property type="protein sequence ID" value="AAC77092.1"/>
    <property type="molecule type" value="Genomic_DNA"/>
</dbReference>
<dbReference type="EMBL" id="AP009048">
    <property type="protein sequence ID" value="BAE78134.1"/>
    <property type="molecule type" value="Genomic_DNA"/>
</dbReference>
<dbReference type="EMBL" id="M67452">
    <property type="protein sequence ID" value="AAA23533.1"/>
    <property type="molecule type" value="Genomic_DNA"/>
</dbReference>
<dbReference type="PIR" id="B41842">
    <property type="entry name" value="B41842"/>
</dbReference>
<dbReference type="RefSeq" id="NP_418555.1">
    <property type="nucleotide sequence ID" value="NC_000913.3"/>
</dbReference>
<dbReference type="RefSeq" id="WP_001295383.1">
    <property type="nucleotide sequence ID" value="NZ_STEB01000014.1"/>
</dbReference>
<dbReference type="PDB" id="3N75">
    <property type="method" value="X-ray"/>
    <property type="resolution" value="2.00 A"/>
    <property type="chains" value="A/B/C/D/E=1-715"/>
</dbReference>
<dbReference type="PDB" id="3Q16">
    <property type="method" value="X-ray"/>
    <property type="resolution" value="4.10 A"/>
    <property type="chains" value="A/B/C/D/E=1-715"/>
</dbReference>
<dbReference type="PDB" id="4UPB">
    <property type="method" value="EM"/>
    <property type="resolution" value="11.00 A"/>
    <property type="chains" value="A/B=1-715"/>
</dbReference>
<dbReference type="PDB" id="4UPF">
    <property type="method" value="EM"/>
    <property type="resolution" value="7.50 A"/>
    <property type="chains" value="A=1-715"/>
</dbReference>
<dbReference type="PDB" id="5FKX">
    <property type="method" value="EM"/>
    <property type="resolution" value="6.10 A"/>
    <property type="chains" value="A=1-711"/>
</dbReference>
<dbReference type="PDB" id="5FL2">
    <property type="method" value="EM"/>
    <property type="resolution" value="6.20 A"/>
    <property type="chains" value="A=1-711"/>
</dbReference>
<dbReference type="PDB" id="6Q7L">
    <property type="method" value="EM"/>
    <property type="resolution" value="7.60 A"/>
    <property type="chains" value="A/B/C/D/E/F/G/H/I/J/K/L/M/N/O/P/Q/R/S/T=1-715"/>
</dbReference>
<dbReference type="PDB" id="6Q7M">
    <property type="method" value="EM"/>
    <property type="resolution" value="7.80 A"/>
    <property type="chains" value="A/B/C/D/E/F/G/H/I/J/K/L/M/N/O/P/Q/R/S/T=1-715"/>
</dbReference>
<dbReference type="PDB" id="6YN5">
    <property type="method" value="EM"/>
    <property type="resolution" value="2.70 A"/>
    <property type="chains" value="A/B/C/D/E/F/G/H/I/J=1-711"/>
</dbReference>
<dbReference type="PDB" id="6YN6">
    <property type="method" value="EM"/>
    <property type="resolution" value="3.28 A"/>
    <property type="chains" value="A/B/C/D/E/F/G/H/I/J/K/L/M/N/O/P/Q/R/S/T=1-711"/>
</dbReference>
<dbReference type="PDBsum" id="3N75"/>
<dbReference type="PDBsum" id="3Q16"/>
<dbReference type="PDBsum" id="4UPB"/>
<dbReference type="PDBsum" id="4UPF"/>
<dbReference type="PDBsum" id="5FKX"/>
<dbReference type="PDBsum" id="5FL2"/>
<dbReference type="PDBsum" id="6Q7L"/>
<dbReference type="PDBsum" id="6Q7M"/>
<dbReference type="PDBsum" id="6YN5"/>
<dbReference type="PDBsum" id="6YN6"/>
<dbReference type="EMDB" id="EMD-10849"/>
<dbReference type="EMDB" id="EMD-10850"/>
<dbReference type="EMDB" id="EMD-2679"/>
<dbReference type="EMDB" id="EMD-2681"/>
<dbReference type="EMDB" id="EMD-3204"/>
<dbReference type="EMDB" id="EMD-3206"/>
<dbReference type="EMDB" id="EMD-4469"/>
<dbReference type="EMDB" id="EMD-4470"/>
<dbReference type="SMR" id="P0A9H3"/>
<dbReference type="BioGRID" id="4260777">
    <property type="interactions" value="8"/>
</dbReference>
<dbReference type="DIP" id="DIP-35646N"/>
<dbReference type="FunCoup" id="P0A9H3">
    <property type="interactions" value="194"/>
</dbReference>
<dbReference type="IntAct" id="P0A9H3">
    <property type="interactions" value="20"/>
</dbReference>
<dbReference type="MINT" id="P0A9H3"/>
<dbReference type="STRING" id="511145.b4131"/>
<dbReference type="jPOST" id="P0A9H3"/>
<dbReference type="PaxDb" id="511145-b4131"/>
<dbReference type="EnsemblBacteria" id="AAC77092">
    <property type="protein sequence ID" value="AAC77092"/>
    <property type="gene ID" value="b4131"/>
</dbReference>
<dbReference type="GeneID" id="75203986"/>
<dbReference type="GeneID" id="948643"/>
<dbReference type="KEGG" id="ecj:JW4092"/>
<dbReference type="KEGG" id="eco:b4131"/>
<dbReference type="KEGG" id="ecoc:C3026_22330"/>
<dbReference type="PATRIC" id="fig|1411691.4.peg.2568"/>
<dbReference type="EchoBASE" id="EB0129"/>
<dbReference type="eggNOG" id="COG1982">
    <property type="taxonomic scope" value="Bacteria"/>
</dbReference>
<dbReference type="HOGENOM" id="CLU_014292_3_0_6"/>
<dbReference type="InParanoid" id="P0A9H3"/>
<dbReference type="OMA" id="HKSVFHA"/>
<dbReference type="OrthoDB" id="9761189at2"/>
<dbReference type="PhylomeDB" id="P0A9H3"/>
<dbReference type="BioCyc" id="EcoCyc:LYSDECARBOX-MONOMER"/>
<dbReference type="BioCyc" id="MetaCyc:LYSDECARBOX-MONOMER"/>
<dbReference type="BRENDA" id="4.1.1.18">
    <property type="organism ID" value="2026"/>
</dbReference>
<dbReference type="EvolutionaryTrace" id="P0A9H3"/>
<dbReference type="PRO" id="PR:P0A9H3"/>
<dbReference type="Proteomes" id="UP000000625">
    <property type="component" value="Chromosome"/>
</dbReference>
<dbReference type="GO" id="GO:0005737">
    <property type="term" value="C:cytoplasm"/>
    <property type="evidence" value="ECO:0007669"/>
    <property type="project" value="UniProtKB-SubCell"/>
</dbReference>
<dbReference type="GO" id="GO:0097216">
    <property type="term" value="F:guanosine tetraphosphate binding"/>
    <property type="evidence" value="ECO:0000314"/>
    <property type="project" value="EcoCyc"/>
</dbReference>
<dbReference type="GO" id="GO:0042802">
    <property type="term" value="F:identical protein binding"/>
    <property type="evidence" value="ECO:0000353"/>
    <property type="project" value="IntAct"/>
</dbReference>
<dbReference type="GO" id="GO:0008923">
    <property type="term" value="F:lysine decarboxylase activity"/>
    <property type="evidence" value="ECO:0000314"/>
    <property type="project" value="EcoCyc"/>
</dbReference>
<dbReference type="GO" id="GO:0006554">
    <property type="term" value="P:lysine catabolic process"/>
    <property type="evidence" value="ECO:0000315"/>
    <property type="project" value="EcoliWiki"/>
</dbReference>
<dbReference type="CDD" id="cd00615">
    <property type="entry name" value="Orn_deC_like"/>
    <property type="match status" value="1"/>
</dbReference>
<dbReference type="FunFam" id="3.40.50.2300:FF:000084">
    <property type="entry name" value="Lysine decarboxylase, inducible"/>
    <property type="match status" value="1"/>
</dbReference>
<dbReference type="FunFam" id="3.40.640.10:FF:000008">
    <property type="entry name" value="Lysine decarboxylase, inducible"/>
    <property type="match status" value="1"/>
</dbReference>
<dbReference type="FunFam" id="3.90.100.10:FF:000001">
    <property type="entry name" value="Lysine decarboxylase, inducible"/>
    <property type="match status" value="1"/>
</dbReference>
<dbReference type="FunFam" id="3.90.1150.10:FF:000016">
    <property type="entry name" value="Lysine decarboxylase, inducible"/>
    <property type="match status" value="1"/>
</dbReference>
<dbReference type="Gene3D" id="3.40.50.2300">
    <property type="match status" value="1"/>
</dbReference>
<dbReference type="Gene3D" id="3.90.1150.10">
    <property type="entry name" value="Aspartate Aminotransferase, domain 1"/>
    <property type="match status" value="1"/>
</dbReference>
<dbReference type="Gene3D" id="3.90.100.10">
    <property type="entry name" value="Orn/Lys/Arg decarboxylase, C-terminal domain"/>
    <property type="match status" value="1"/>
</dbReference>
<dbReference type="Gene3D" id="3.40.640.10">
    <property type="entry name" value="Type I PLP-dependent aspartate aminotransferase-like (Major domain)"/>
    <property type="match status" value="1"/>
</dbReference>
<dbReference type="InterPro" id="IPR005308">
    <property type="entry name" value="OKR_de-COase_N"/>
</dbReference>
<dbReference type="InterPro" id="IPR011193">
    <property type="entry name" value="Orn/lys/arg_de-COase"/>
</dbReference>
<dbReference type="InterPro" id="IPR000310">
    <property type="entry name" value="Orn/Lys/Arg_deCO2ase_major_dom"/>
</dbReference>
<dbReference type="InterPro" id="IPR008286">
    <property type="entry name" value="Prn/Lys/Arg_de-COase_C"/>
</dbReference>
<dbReference type="InterPro" id="IPR036633">
    <property type="entry name" value="Prn/Lys/Arg_de-COase_C_sf"/>
</dbReference>
<dbReference type="InterPro" id="IPR015424">
    <property type="entry name" value="PyrdxlP-dep_Trfase"/>
</dbReference>
<dbReference type="InterPro" id="IPR015421">
    <property type="entry name" value="PyrdxlP-dep_Trfase_major"/>
</dbReference>
<dbReference type="InterPro" id="IPR015422">
    <property type="entry name" value="PyrdxlP-dep_Trfase_small"/>
</dbReference>
<dbReference type="NCBIfam" id="NF011928">
    <property type="entry name" value="PRK15399.1"/>
    <property type="match status" value="1"/>
</dbReference>
<dbReference type="NCBIfam" id="NF011929">
    <property type="entry name" value="PRK15400.1"/>
    <property type="match status" value="1"/>
</dbReference>
<dbReference type="PANTHER" id="PTHR45229:SF3">
    <property type="entry name" value="BIODEGRADATIVE ARGININE DECARBOXYLASE"/>
    <property type="match status" value="1"/>
</dbReference>
<dbReference type="PANTHER" id="PTHR45229">
    <property type="entry name" value="CONSTITUTIVE ORNITHINE DECARBOXYLASE"/>
    <property type="match status" value="1"/>
</dbReference>
<dbReference type="Pfam" id="PF01276">
    <property type="entry name" value="OKR_DC_1"/>
    <property type="match status" value="1"/>
</dbReference>
<dbReference type="Pfam" id="PF03711">
    <property type="entry name" value="OKR_DC_1_C"/>
    <property type="match status" value="1"/>
</dbReference>
<dbReference type="Pfam" id="PF03709">
    <property type="entry name" value="OKR_DC_1_N"/>
    <property type="match status" value="1"/>
</dbReference>
<dbReference type="PIRSF" id="PIRSF009393">
    <property type="entry name" value="Orn_decarb"/>
    <property type="match status" value="1"/>
</dbReference>
<dbReference type="SUPFAM" id="SSF55904">
    <property type="entry name" value="Ornithine decarboxylase C-terminal domain"/>
    <property type="match status" value="1"/>
</dbReference>
<dbReference type="SUPFAM" id="SSF53383">
    <property type="entry name" value="PLP-dependent transferases"/>
    <property type="match status" value="1"/>
</dbReference>
<dbReference type="PROSITE" id="PS00703">
    <property type="entry name" value="OKR_DC_1"/>
    <property type="match status" value="1"/>
</dbReference>
<name>LDCI_ECOLI</name>
<gene>
    <name type="primary">cadA</name>
    <name type="synonym">ldcI</name>
    <name type="ordered locus">b4131</name>
    <name type="ordered locus">JW4092</name>
</gene>
<evidence type="ECO:0000269" key="1">
    <source>
    </source>
</evidence>
<evidence type="ECO:0000269" key="2">
    <source>
    </source>
</evidence>
<evidence type="ECO:0000269" key="3">
    <source>
    </source>
</evidence>
<evidence type="ECO:0000269" key="4">
    <source>
    </source>
</evidence>
<evidence type="ECO:0000269" key="5">
    <source>
    </source>
</evidence>
<evidence type="ECO:0000269" key="6">
    <source>
    </source>
</evidence>
<evidence type="ECO:0000269" key="7">
    <source>
    </source>
</evidence>
<evidence type="ECO:0000269" key="8">
    <source>
    </source>
</evidence>
<evidence type="ECO:0000269" key="9">
    <source>
    </source>
</evidence>
<evidence type="ECO:0000269" key="10">
    <source>
    </source>
</evidence>
<evidence type="ECO:0000303" key="11">
    <source>
    </source>
</evidence>
<evidence type="ECO:0000305" key="12"/>
<evidence type="ECO:0007829" key="13">
    <source>
        <dbReference type="PDB" id="3N75"/>
    </source>
</evidence>
<evidence type="ECO:0007829" key="14">
    <source>
        <dbReference type="PDB" id="6YN5"/>
    </source>
</evidence>
<accession>P0A9H3</accession>
<accession>P23892</accession>
<accession>Q2M6H2</accession>
<feature type="chain" id="PRO_0000201138" description="Inducible lysine decarboxylase">
    <location>
        <begin position="1"/>
        <end position="715"/>
    </location>
</feature>
<feature type="modified residue" description="N6-(pyridoxal phosphate)lysine">
    <location>
        <position position="367"/>
    </location>
</feature>
<feature type="strand" evidence="13">
    <location>
        <begin position="3"/>
        <end position="7"/>
    </location>
</feature>
<feature type="helix" evidence="13">
    <location>
        <begin position="13"/>
        <end position="28"/>
    </location>
</feature>
<feature type="strand" evidence="13">
    <location>
        <begin position="32"/>
        <end position="34"/>
    </location>
</feature>
<feature type="helix" evidence="13">
    <location>
        <begin position="39"/>
        <end position="48"/>
    </location>
</feature>
<feature type="strand" evidence="13">
    <location>
        <begin position="52"/>
        <end position="58"/>
    </location>
</feature>
<feature type="helix" evidence="13">
    <location>
        <begin position="59"/>
        <end position="73"/>
    </location>
</feature>
<feature type="strand" evidence="13">
    <location>
        <begin position="78"/>
        <end position="82"/>
    </location>
</feature>
<feature type="helix" evidence="13">
    <location>
        <begin position="91"/>
        <end position="93"/>
    </location>
</feature>
<feature type="strand" evidence="14">
    <location>
        <begin position="94"/>
        <end position="96"/>
    </location>
</feature>
<feature type="strand" evidence="13">
    <location>
        <begin position="99"/>
        <end position="103"/>
    </location>
</feature>
<feature type="helix" evidence="13">
    <location>
        <begin position="110"/>
        <end position="128"/>
    </location>
</feature>
<feature type="helix" evidence="13">
    <location>
        <begin position="131"/>
        <end position="142"/>
    </location>
</feature>
<feature type="turn" evidence="13">
    <location>
        <begin position="151"/>
        <end position="155"/>
    </location>
</feature>
<feature type="helix" evidence="13">
    <location>
        <begin position="156"/>
        <end position="160"/>
    </location>
</feature>
<feature type="helix" evidence="13">
    <location>
        <begin position="162"/>
        <end position="171"/>
    </location>
</feature>
<feature type="helix" evidence="13">
    <location>
        <begin position="173"/>
        <end position="177"/>
    </location>
</feature>
<feature type="helix" evidence="13">
    <location>
        <begin position="185"/>
        <end position="187"/>
    </location>
</feature>
<feature type="turn" evidence="13">
    <location>
        <begin position="190"/>
        <end position="193"/>
    </location>
</feature>
<feature type="helix" evidence="13">
    <location>
        <begin position="196"/>
        <end position="208"/>
    </location>
</feature>
<feature type="strand" evidence="13">
    <location>
        <begin position="211"/>
        <end position="218"/>
    </location>
</feature>
<feature type="helix" evidence="13">
    <location>
        <begin position="219"/>
        <end position="231"/>
    </location>
</feature>
<feature type="strand" evidence="13">
    <location>
        <begin position="237"/>
        <end position="243"/>
    </location>
</feature>
<feature type="helix" evidence="13">
    <location>
        <begin position="246"/>
        <end position="254"/>
    </location>
</feature>
<feature type="strand" evidence="13">
    <location>
        <begin position="258"/>
        <end position="262"/>
    </location>
</feature>
<feature type="helix" evidence="13">
    <location>
        <begin position="277"/>
        <end position="280"/>
    </location>
</feature>
<feature type="helix" evidence="13">
    <location>
        <begin position="282"/>
        <end position="291"/>
    </location>
</feature>
<feature type="strand" evidence="13">
    <location>
        <begin position="299"/>
        <end position="306"/>
    </location>
</feature>
<feature type="strand" evidence="13">
    <location>
        <begin position="310"/>
        <end position="313"/>
    </location>
</feature>
<feature type="helix" evidence="13">
    <location>
        <begin position="315"/>
        <end position="321"/>
    </location>
</feature>
<feature type="strand" evidence="13">
    <location>
        <begin position="325"/>
        <end position="330"/>
    </location>
</feature>
<feature type="helix" evidence="13">
    <location>
        <begin position="337"/>
        <end position="339"/>
    </location>
</feature>
<feature type="helix" evidence="13">
    <location>
        <begin position="341"/>
        <end position="343"/>
    </location>
</feature>
<feature type="strand" evidence="13">
    <location>
        <begin position="350"/>
        <end position="352"/>
    </location>
</feature>
<feature type="strand" evidence="13">
    <location>
        <begin position="358"/>
        <end position="363"/>
    </location>
</feature>
<feature type="strand" evidence="13">
    <location>
        <begin position="376"/>
        <end position="382"/>
    </location>
</feature>
<feature type="helix" evidence="13">
    <location>
        <begin position="386"/>
        <end position="395"/>
    </location>
</feature>
<feature type="helix" evidence="13">
    <location>
        <begin position="403"/>
        <end position="416"/>
    </location>
</feature>
<feature type="helix" evidence="13">
    <location>
        <begin position="418"/>
        <end position="445"/>
    </location>
</feature>
<feature type="strand" evidence="13">
    <location>
        <begin position="446"/>
        <end position="448"/>
    </location>
</feature>
<feature type="strand" evidence="13">
    <location>
        <begin position="452"/>
        <end position="455"/>
    </location>
</feature>
<feature type="strand" evidence="14">
    <location>
        <begin position="461"/>
        <end position="463"/>
    </location>
</feature>
<feature type="strand" evidence="13">
    <location>
        <begin position="481"/>
        <end position="486"/>
    </location>
</feature>
<feature type="strand" evidence="13">
    <location>
        <begin position="490"/>
        <end position="494"/>
    </location>
</feature>
<feature type="strand" evidence="14">
    <location>
        <begin position="496"/>
        <end position="498"/>
    </location>
</feature>
<feature type="helix" evidence="13">
    <location>
        <begin position="511"/>
        <end position="520"/>
    </location>
</feature>
<feature type="strand" evidence="13">
    <location>
        <begin position="526"/>
        <end position="529"/>
    </location>
</feature>
<feature type="strand" evidence="13">
    <location>
        <begin position="532"/>
        <end position="536"/>
    </location>
</feature>
<feature type="helix" evidence="13">
    <location>
        <begin position="543"/>
        <end position="561"/>
    </location>
</feature>
<feature type="helix" evidence="13">
    <location>
        <begin position="566"/>
        <end position="569"/>
    </location>
</feature>
<feature type="helix" evidence="13">
    <location>
        <begin position="571"/>
        <end position="576"/>
    </location>
</feature>
<feature type="helix" evidence="13">
    <location>
        <begin position="578"/>
        <end position="581"/>
    </location>
</feature>
<feature type="helix" evidence="13">
    <location>
        <begin position="586"/>
        <end position="599"/>
    </location>
</feature>
<feature type="helix" evidence="13">
    <location>
        <begin position="602"/>
        <end position="609"/>
    </location>
</feature>
<feature type="strand" evidence="14">
    <location>
        <begin position="610"/>
        <end position="612"/>
    </location>
</feature>
<feature type="strand" evidence="13">
    <location>
        <begin position="615"/>
        <end position="618"/>
    </location>
</feature>
<feature type="helix" evidence="13">
    <location>
        <begin position="620"/>
        <end position="628"/>
    </location>
</feature>
<feature type="strand" evidence="13">
    <location>
        <begin position="632"/>
        <end position="636"/>
    </location>
</feature>
<feature type="helix" evidence="13">
    <location>
        <begin position="637"/>
        <end position="639"/>
    </location>
</feature>
<feature type="strand" evidence="13">
    <location>
        <begin position="644"/>
        <end position="647"/>
    </location>
</feature>
<feature type="strand" evidence="13">
    <location>
        <begin position="649"/>
        <end position="652"/>
    </location>
</feature>
<feature type="strand" evidence="14">
    <location>
        <begin position="663"/>
        <end position="665"/>
    </location>
</feature>
<feature type="helix" evidence="14">
    <location>
        <begin position="667"/>
        <end position="669"/>
    </location>
</feature>
<feature type="helix" evidence="13">
    <location>
        <begin position="670"/>
        <end position="682"/>
    </location>
</feature>
<feature type="strand" evidence="13">
    <location>
        <begin position="692"/>
        <end position="694"/>
    </location>
</feature>
<feature type="strand" evidence="14">
    <location>
        <begin position="696"/>
        <end position="698"/>
    </location>
</feature>
<feature type="strand" evidence="13">
    <location>
        <begin position="704"/>
        <end position="709"/>
    </location>
</feature>